<reference key="1">
    <citation type="journal article" date="1994" name="EMBO J.">
        <title>enod40, a gene expressed during nodule organogenesis, codes for a non-translatable RNA involved in plant growth.</title>
        <authorList>
            <person name="Crespi M.D."/>
            <person name="Jurkevitch E."/>
            <person name="Poiret M."/>
            <person name="d'Aubenton-Carafa Y."/>
            <person name="Petrovics G."/>
            <person name="Kondorosi E."/>
            <person name="Kondorosi A."/>
        </authorList>
    </citation>
    <scope>NUCLEOTIDE SEQUENCE [MRNA] (ISOFORMS 1 AND 2)</scope>
    <scope>DEVELOPMENTAL STAGE</scope>
    <scope>TISSUE SPECIFICITY</scope>
    <scope>INDUCTION BY SINORHIZOBIUM MELILOTI</scope>
    <source>
        <strain>cv. Ghor</strain>
        <tissue>Root nodule</tissue>
    </source>
</reference>
<reference key="2">
    <citation type="journal article" date="2007" name="J. Exp. Bot.">
        <title>Medicago truncatula ENOD40-1 and ENOD40-2 are both involved in nodule initiation and bacteroid development.</title>
        <authorList>
            <person name="Wan X."/>
            <person name="Hontelez J."/>
            <person name="Lillo A."/>
            <person name="Guarnerio C."/>
            <person name="van de Peut D."/>
            <person name="Fedorova E."/>
            <person name="Bisseling T."/>
            <person name="Franssen H."/>
        </authorList>
    </citation>
    <scope>NUCLEOTIDE SEQUENCE [MRNA] (ISOFORM 1)</scope>
    <scope>FUNCTION</scope>
    <scope>DISRUPTION PHENOTYPE</scope>
</reference>
<reference key="3">
    <citation type="journal article" date="2011" name="Nature">
        <title>The Medicago genome provides insight into the evolution of rhizobial symbioses.</title>
        <authorList>
            <person name="Young N.D."/>
            <person name="Debelle F."/>
            <person name="Oldroyd G.E.D."/>
            <person name="Geurts R."/>
            <person name="Cannon S.B."/>
            <person name="Udvardi M.K."/>
            <person name="Benedito V.A."/>
            <person name="Mayer K.F.X."/>
            <person name="Gouzy J."/>
            <person name="Schoof H."/>
            <person name="Van de Peer Y."/>
            <person name="Proost S."/>
            <person name="Cook D.R."/>
            <person name="Meyers B.C."/>
            <person name="Spannagl M."/>
            <person name="Cheung F."/>
            <person name="De Mita S."/>
            <person name="Krishnakumar V."/>
            <person name="Gundlach H."/>
            <person name="Zhou S."/>
            <person name="Mudge J."/>
            <person name="Bharti A.K."/>
            <person name="Murray J.D."/>
            <person name="Naoumkina M.A."/>
            <person name="Rosen B."/>
            <person name="Silverstein K.A.T."/>
            <person name="Tang H."/>
            <person name="Rombauts S."/>
            <person name="Zhao P.X."/>
            <person name="Zhou P."/>
            <person name="Barbe V."/>
            <person name="Bardou P."/>
            <person name="Bechner M."/>
            <person name="Bellec A."/>
            <person name="Berger A."/>
            <person name="Berges H."/>
            <person name="Bidwell S."/>
            <person name="Bisseling T."/>
            <person name="Choisne N."/>
            <person name="Couloux A."/>
            <person name="Denny R."/>
            <person name="Deshpande S."/>
            <person name="Dai X."/>
            <person name="Doyle J.J."/>
            <person name="Dudez A.-M."/>
            <person name="Farmer A.D."/>
            <person name="Fouteau S."/>
            <person name="Franken C."/>
            <person name="Gibelin C."/>
            <person name="Gish J."/>
            <person name="Goldstein S."/>
            <person name="Gonzalez A.J."/>
            <person name="Green P.J."/>
            <person name="Hallab A."/>
            <person name="Hartog M."/>
            <person name="Hua A."/>
            <person name="Humphray S.J."/>
            <person name="Jeong D.-H."/>
            <person name="Jing Y."/>
            <person name="Jocker A."/>
            <person name="Kenton S.M."/>
            <person name="Kim D.-J."/>
            <person name="Klee K."/>
            <person name="Lai H."/>
            <person name="Lang C."/>
            <person name="Lin S."/>
            <person name="Macmil S.L."/>
            <person name="Magdelenat G."/>
            <person name="Matthews L."/>
            <person name="McCorrison J."/>
            <person name="Monaghan E.L."/>
            <person name="Mun J.-H."/>
            <person name="Najar F.Z."/>
            <person name="Nicholson C."/>
            <person name="Noirot C."/>
            <person name="O'Bleness M."/>
            <person name="Paule C.R."/>
            <person name="Poulain J."/>
            <person name="Prion F."/>
            <person name="Qin B."/>
            <person name="Qu C."/>
            <person name="Retzel E.F."/>
            <person name="Riddle C."/>
            <person name="Sallet E."/>
            <person name="Samain S."/>
            <person name="Samson N."/>
            <person name="Sanders I."/>
            <person name="Saurat O."/>
            <person name="Scarpelli C."/>
            <person name="Schiex T."/>
            <person name="Segurens B."/>
            <person name="Severin A.J."/>
            <person name="Sherrier D.J."/>
            <person name="Shi R."/>
            <person name="Sims S."/>
            <person name="Singer S.R."/>
            <person name="Sinharoy S."/>
            <person name="Sterck L."/>
            <person name="Viollet A."/>
            <person name="Wang B.-B."/>
            <person name="Wang K."/>
            <person name="Wang M."/>
            <person name="Wang X."/>
            <person name="Warfsmann J."/>
            <person name="Weissenbach J."/>
            <person name="White D.D."/>
            <person name="White J.D."/>
            <person name="Wiley G.B."/>
            <person name="Wincker P."/>
            <person name="Xing Y."/>
            <person name="Yang L."/>
            <person name="Yao Z."/>
            <person name="Ying F."/>
            <person name="Zhai J."/>
            <person name="Zhou L."/>
            <person name="Zuber A."/>
            <person name="Denarie J."/>
            <person name="Dixon R.A."/>
            <person name="May G.D."/>
            <person name="Schwartz D.C."/>
            <person name="Rogers J."/>
            <person name="Quetier F."/>
            <person name="Town C.D."/>
            <person name="Roe B.A."/>
        </authorList>
    </citation>
    <scope>NUCLEOTIDE SEQUENCE [LARGE SCALE GENOMIC DNA]</scope>
    <source>
        <strain>cv. Jemalong A17</strain>
    </source>
</reference>
<reference key="4">
    <citation type="journal article" date="2014" name="BMC Genomics">
        <title>An improved genome release (version Mt4.0) for the model legume Medicago truncatula.</title>
        <authorList>
            <person name="Tang H."/>
            <person name="Krishnakumar V."/>
            <person name="Bidwell S."/>
            <person name="Rosen B."/>
            <person name="Chan A."/>
            <person name="Zhou S."/>
            <person name="Gentzbittel L."/>
            <person name="Childs K.L."/>
            <person name="Yandell M."/>
            <person name="Gundlach H."/>
            <person name="Mayer K.F."/>
            <person name="Schwartz D.C."/>
            <person name="Town C.D."/>
        </authorList>
    </citation>
    <scope>GENOME REANNOTATION</scope>
    <source>
        <strain>cv. Jemalong A17</strain>
    </source>
</reference>
<reference key="5">
    <citation type="journal article" date="1997" name="Proc. Natl. Acad. Sci. U.S.A.">
        <title>enod40 induces dedifferentiation and division of root cortical cells in legumes.</title>
        <authorList>
            <person name="Charon C."/>
            <person name="Johansson C."/>
            <person name="Kondorosi E."/>
            <person name="Kondorosi A."/>
            <person name="Crespi M."/>
        </authorList>
    </citation>
    <scope>FUNCTION</scope>
</reference>
<reference key="6">
    <citation type="journal article" date="1999" name="Plant Cell">
        <title>Alteration of enod40 expression modifies medicago truncatula root nodule development induced by sinorhizobium meliloti.</title>
        <authorList>
            <person name="Charon C."/>
            <person name="Sousa C."/>
            <person name="Crespi M."/>
            <person name="Kondorosi A."/>
        </authorList>
    </citation>
    <scope>FUNCTION</scope>
    <scope>DISRUPTION PHENOTYPE</scope>
    <source>
        <strain>cv. 108R</strain>
    </source>
</reference>
<reference key="7">
    <citation type="journal article" date="2001" name="Mol. Cell. Biol.">
        <title>Translational and structural requirements of the early nodulin gene enod40, a short-open reading frame-containing RNA, for elicitation of a cell-specific growth response in the alfalfa root cortex.</title>
        <authorList>
            <person name="Sousa C."/>
            <person name="Johansson C."/>
            <person name="Charon C."/>
            <person name="Manyani H."/>
            <person name="Sautter C."/>
            <person name="Kondorosi A."/>
            <person name="Crespi M."/>
        </authorList>
    </citation>
    <scope>FUNCTION</scope>
    <scope>ALTERNATIVE SPLICING</scope>
    <source>
        <strain>cv. Sitel</strain>
    </source>
</reference>
<reference key="8">
    <citation type="journal article" date="2001" name="Proc. Natl. Acad. Sci. U.S.A.">
        <title>Medicago truncatula plants overexpressing the early nodulin gene enod40 exhibit accelerated mycorrhizal colonization and enhanced formation of arbuscules.</title>
        <authorList>
            <person name="Staehelin C."/>
            <person name="Charon C."/>
            <person name="Boller T."/>
            <person name="Crespi M."/>
            <person name="Kondorosi A."/>
        </authorList>
    </citation>
    <scope>FUNCTION</scope>
    <scope>DISRUPTION PHENOTYPE</scope>
    <source>
        <strain>cv. 108R</strain>
    </source>
</reference>
<reference key="9">
    <citation type="journal article" date="2002" name="Mol. Plant Microbe Interact.">
        <title>The endosymbiosis-induced genes ENOD40 and CCS52a are involved in endoparasitic-nematode interactions in Medicago truncatula.</title>
        <authorList>
            <person name="Favery B."/>
            <person name="Complainville A."/>
            <person name="Vinardell J.M."/>
            <person name="Lecomte P."/>
            <person name="Vaubert D."/>
            <person name="Mergaert P."/>
            <person name="Kondorosi A."/>
            <person name="Kondorosi E."/>
            <person name="Crespi M."/>
            <person name="Abad P."/>
        </authorList>
    </citation>
    <scope>FUNCTION</scope>
    <scope>INDUCTION BY MELOIDOGYNE INCOGNITA</scope>
    <scope>DEVELOPMENTAL STAGE</scope>
</reference>
<reference key="10">
    <citation type="journal article" date="2004" name="Plant Cell">
        <title>Enod40, a short open reading frame-containing mRNA, induces cytoplasmic localization of a nuclear RNA binding protein in Medicago truncatula.</title>
        <authorList>
            <person name="Campalans A."/>
            <person name="Kondorosi A."/>
            <person name="Crespi M."/>
        </authorList>
    </citation>
    <scope>MISCELLANEOUS</scope>
    <scope>TISSUE SPECIFICITY</scope>
</reference>
<reference key="11">
    <citation type="journal article" date="2004" name="Plant Physiol.">
        <title>LIN, a Medicago truncatula gene required for nodule differentiation and persistence of rhizobial infections.</title>
        <authorList>
            <person name="Kuppusamy K.T."/>
            <person name="Endre G."/>
            <person name="Prabhu R."/>
            <person name="Penmetsa R.V."/>
            <person name="Veereshlingam H."/>
            <person name="Cook D.R."/>
            <person name="Dickstein R."/>
            <person name="Vandenbosch K.A."/>
        </authorList>
    </citation>
    <scope>INDUCTION DURING NODULATION</scope>
    <source>
        <strain>cv. Jemalong A17</strain>
    </source>
</reference>
<reference key="12">
    <citation type="journal article" date="2015" name="Int. Rev. Cell Mol. Biol.">
        <title>Leguminous plants: inventors of root nodules to accommodate symbiotic bacteria.</title>
        <authorList>
            <person name="Suzaki T."/>
            <person name="Yoro E."/>
            <person name="Kawaguchi M."/>
        </authorList>
    </citation>
    <scope>REVIEW ON NODULATION</scope>
</reference>
<reference key="13">
    <citation type="journal article" date="2020" name="Plant Cell">
        <title>Celebrating 20 years of genetic discoveries in legume nodulation and symbiotic nitrogen fixation.</title>
        <authorList>
            <person name="Roy S."/>
            <person name="Liu W."/>
            <person name="Nandety R.S."/>
            <person name="Crook A."/>
            <person name="Mysore K.S."/>
            <person name="Pislariu C.I."/>
            <person name="Frugoli J."/>
            <person name="Dickstein R."/>
            <person name="Udvardi M.K."/>
        </authorList>
    </citation>
    <scope>REVIEW ON NODULATION</scope>
</reference>
<dbReference type="EMBL" id="X80264">
    <property type="status" value="NOT_ANNOTATED_CDS"/>
    <property type="molecule type" value="mRNA"/>
</dbReference>
<dbReference type="EMBL" id="CM001221">
    <property type="status" value="NOT_ANNOTATED_CDS"/>
    <property type="molecule type" value="Genomic_DNA"/>
</dbReference>
<dbReference type="Proteomes" id="UP000002051">
    <property type="component" value="Chromosome 5"/>
</dbReference>
<dbReference type="GO" id="GO:0036377">
    <property type="term" value="P:arbuscular mycorrhizal association"/>
    <property type="evidence" value="ECO:0000315"/>
    <property type="project" value="UniProtKB"/>
</dbReference>
<dbReference type="GO" id="GO:0009877">
    <property type="term" value="P:nodulation"/>
    <property type="evidence" value="ECO:0000314"/>
    <property type="project" value="UniProtKB"/>
</dbReference>
<dbReference type="GO" id="GO:0001759">
    <property type="term" value="P:organ induction"/>
    <property type="evidence" value="ECO:0000315"/>
    <property type="project" value="UniProtKB"/>
</dbReference>
<dbReference type="GO" id="GO:0009624">
    <property type="term" value="P:response to nematode"/>
    <property type="evidence" value="ECO:0000315"/>
    <property type="project" value="UniProtKB"/>
</dbReference>
<dbReference type="GO" id="GO:0009609">
    <property type="term" value="P:response to symbiotic bacterium"/>
    <property type="evidence" value="ECO:0000315"/>
    <property type="project" value="UniProtKB"/>
</dbReference>
<dbReference type="GO" id="GO:0009610">
    <property type="term" value="P:response to symbiotic fungus"/>
    <property type="evidence" value="ECO:0000315"/>
    <property type="project" value="UniProtKB"/>
</dbReference>
<dbReference type="InterPro" id="IPR013186">
    <property type="entry name" value="ENOD40"/>
</dbReference>
<dbReference type="Pfam" id="PF08247">
    <property type="entry name" value="ENOD40"/>
    <property type="match status" value="1"/>
</dbReference>
<sequence>MKLLCWEKSIHGS</sequence>
<protein>
    <recommendedName>
        <fullName evidence="11">Early nodulin-40-1</fullName>
        <shortName evidence="12">Mtenod4O</shortName>
    </recommendedName>
</protein>
<gene>
    <name evidence="11" type="primary">ENOD40-1</name>
</gene>
<feature type="peptide" id="PRO_0000457859" description="Early nodulin-40-1">
    <location>
        <begin position="1"/>
        <end position="13"/>
    </location>
</feature>
<feature type="splice variant" id="VSP_061848" description="In isoform 2.">
    <original>KLLCWEKSIHGS</original>
    <variation>ANRQVTKRQWIPFWSLNGYVSITLSM</variation>
    <location>
        <begin position="2"/>
        <end position="13"/>
    </location>
</feature>
<proteinExistence type="evidence at transcript level"/>
<keyword id="KW-0024">Alternative initiation</keyword>
<keyword id="KW-0536">Nodulation</keyword>
<keyword id="KW-1185">Reference proteome</keyword>
<name>NO40A_MEDTR</name>
<evidence type="ECO:0000269" key="1">
    <source>
    </source>
</evidence>
<evidence type="ECO:0000269" key="2">
    <source>
    </source>
</evidence>
<evidence type="ECO:0000269" key="3">
    <source>
    </source>
</evidence>
<evidence type="ECO:0000269" key="4">
    <source>
    </source>
</evidence>
<evidence type="ECO:0000269" key="5">
    <source>
    </source>
</evidence>
<evidence type="ECO:0000269" key="6">
    <source>
    </source>
</evidence>
<evidence type="ECO:0000269" key="7">
    <source>
    </source>
</evidence>
<evidence type="ECO:0000269" key="8">
    <source>
    </source>
</evidence>
<evidence type="ECO:0000269" key="9">
    <source>
    </source>
</evidence>
<evidence type="ECO:0000303" key="10">
    <source>
    </source>
</evidence>
<evidence type="ECO:0000303" key="11">
    <source>
    </source>
</evidence>
<evidence type="ECO:0000303" key="12">
    <source>
    </source>
</evidence>
<evidence type="ECO:0000305" key="13"/>
<comment type="function">
    <text evidence="1 2 3 4 5 8 13">Modulates the action of auxin, and may function as plant growth regulator that alters phytohormone responses (Probable). During symbiosis with rhizobacteria such as Sinorhizobium meliloti SM2011, in response to Nod factors and under nitrogen limitation, involved in nodule initiation by inducing dedifferentiation and division of root cortical cells (primordium formation), and essential for bacteroid development during nodulation; this processus is repressed by ethylene (PubMed:10521525, PubMed:11038563, PubMed:11113209, PubMed:17452749). During symbiosis with arbuscular mycorrhizal fungi such as Glomus mosseae and G.intraradices, promotes mycorrhizal colonization in the root cortex and enhances the formation of arbuscules (PubMed:11752473). Involved in root-knot nematode Meloidogyne incognita giant cells formation (PubMed:12437298).</text>
</comment>
<comment type="alternative products">
    <event type="alternative initiation"/>
    <isoform>
        <id>P0DO61-1</id>
        <name>1</name>
        <name evidence="10">ORF-I</name>
        <sequence type="displayed"/>
    </isoform>
    <isoform>
        <id>P0DO61-2</id>
        <name>2</name>
        <name evidence="10">ORF-II</name>
        <sequence type="described" ref="VSP_061848"/>
    </isoform>
    <text evidence="3">Both ORFs I and II are required to induce cortical cell division upon Sinorhizobium meliloti inoculation.</text>
</comment>
<comment type="tissue specificity">
    <text evidence="6 9">Expressed at low levels in roots, stems and flowers (PubMed:7957074). Accumulates in nodules at a high level (PubMed:15037734).</text>
</comment>
<comment type="developmental stage">
    <text evidence="5 9">During root development, weakly expressed in the vascular cylinder (PubMed:12437298). Expressed in all differentiating cells of nodule primordia (in Nod factor-treated roots) and spontaneous nodules but fades out in differentiated nodule cells (PubMed:7957074). Also observed around nodule vascular tissues (PubMed:7957074). After infection with the root-knot nematode Meloidogyne incognita, expressed in cell layers surrounding giant cells (PubMed:12437298).</text>
</comment>
<comment type="induction">
    <text evidence="5 7 9">Accumulates in response to Sinorhizobium meliloti inoculation leading to nodulation (PubMed:15516512, PubMed:7957074). Induced by the root-knot nematode Meloidogyne incognita at the nematode feeding sites (NFS), and accumulates in subsequent root galls (PubMed:12437298).</text>
</comment>
<comment type="disruption phenotype">
    <text evidence="1 4 8">Reduced nodule number after inoculation with Sinorhizobium meliloti SM2011; remaining nodules are abnormally spherical and contain a few small rod-shaped bacteroids, their development is impaired (PubMed:10521525, PubMed:17452749). Bacteroids development is arrested at stage II-III and they undergo premature senescence in cells of the fixation zone leading to the formation of vacuole-like structures as a result of symbiosomes fusion (PubMed:17452749). Reduced mycorrhizal colonization by arbuscular mycorrhizal fungi (e.g. Glomus mosseae and G.intraradices) (PubMed:11752473).</text>
</comment>
<comment type="miscellaneous">
    <text evidence="6">Enod40 mRNA triggers RBP1 translocation to cytoplasmic granules from the nucleus during nodule development.</text>
</comment>
<accession>P0DO61</accession>
<organism>
    <name type="scientific">Medicago truncatula</name>
    <name type="common">Barrel medic</name>
    <name type="synonym">Medicago tribuloides</name>
    <dbReference type="NCBI Taxonomy" id="3880"/>
    <lineage>
        <taxon>Eukaryota</taxon>
        <taxon>Viridiplantae</taxon>
        <taxon>Streptophyta</taxon>
        <taxon>Embryophyta</taxon>
        <taxon>Tracheophyta</taxon>
        <taxon>Spermatophyta</taxon>
        <taxon>Magnoliopsida</taxon>
        <taxon>eudicotyledons</taxon>
        <taxon>Gunneridae</taxon>
        <taxon>Pentapetalae</taxon>
        <taxon>rosids</taxon>
        <taxon>fabids</taxon>
        <taxon>Fabales</taxon>
        <taxon>Fabaceae</taxon>
        <taxon>Papilionoideae</taxon>
        <taxon>50 kb inversion clade</taxon>
        <taxon>NPAAA clade</taxon>
        <taxon>Hologalegina</taxon>
        <taxon>IRL clade</taxon>
        <taxon>Trifolieae</taxon>
        <taxon>Medicago</taxon>
    </lineage>
</organism>